<keyword id="KW-0028">Amino-acid biosynthesis</keyword>
<keyword id="KW-0456">Lyase</keyword>
<keyword id="KW-0479">Metal-binding</keyword>
<keyword id="KW-0486">Methionine biosynthesis</keyword>
<keyword id="KW-1185">Reference proteome</keyword>
<keyword id="KW-0862">Zinc</keyword>
<dbReference type="EC" id="4.2.1.109" evidence="1"/>
<dbReference type="EMBL" id="AM743169">
    <property type="protein sequence ID" value="CAQ45687.1"/>
    <property type="molecule type" value="Genomic_DNA"/>
</dbReference>
<dbReference type="RefSeq" id="WP_012480051.1">
    <property type="nucleotide sequence ID" value="NC_010943.1"/>
</dbReference>
<dbReference type="SMR" id="B2FPP4"/>
<dbReference type="EnsemblBacteria" id="CAQ45687">
    <property type="protein sequence ID" value="CAQ45687"/>
    <property type="gene ID" value="Smlt2189"/>
</dbReference>
<dbReference type="KEGG" id="sml:Smlt2189"/>
<dbReference type="PATRIC" id="fig|522373.3.peg.2081"/>
<dbReference type="eggNOG" id="COG0235">
    <property type="taxonomic scope" value="Bacteria"/>
</dbReference>
<dbReference type="HOGENOM" id="CLU_006033_4_1_6"/>
<dbReference type="UniPathway" id="UPA00904">
    <property type="reaction ID" value="UER00875"/>
</dbReference>
<dbReference type="Proteomes" id="UP000008840">
    <property type="component" value="Chromosome"/>
</dbReference>
<dbReference type="GO" id="GO:0005829">
    <property type="term" value="C:cytosol"/>
    <property type="evidence" value="ECO:0007669"/>
    <property type="project" value="TreeGrafter"/>
</dbReference>
<dbReference type="GO" id="GO:0016832">
    <property type="term" value="F:aldehyde-lyase activity"/>
    <property type="evidence" value="ECO:0007669"/>
    <property type="project" value="TreeGrafter"/>
</dbReference>
<dbReference type="GO" id="GO:0046570">
    <property type="term" value="F:methylthioribulose 1-phosphate dehydratase activity"/>
    <property type="evidence" value="ECO:0007669"/>
    <property type="project" value="UniProtKB-UniRule"/>
</dbReference>
<dbReference type="GO" id="GO:0008270">
    <property type="term" value="F:zinc ion binding"/>
    <property type="evidence" value="ECO:0007669"/>
    <property type="project" value="UniProtKB-UniRule"/>
</dbReference>
<dbReference type="GO" id="GO:0019509">
    <property type="term" value="P:L-methionine salvage from methylthioadenosine"/>
    <property type="evidence" value="ECO:0007669"/>
    <property type="project" value="UniProtKB-UniRule"/>
</dbReference>
<dbReference type="GO" id="GO:0019323">
    <property type="term" value="P:pentose catabolic process"/>
    <property type="evidence" value="ECO:0007669"/>
    <property type="project" value="TreeGrafter"/>
</dbReference>
<dbReference type="FunFam" id="3.40.225.10:FF:000007">
    <property type="entry name" value="Methylthioribulose-1-phosphate dehydratase"/>
    <property type="match status" value="1"/>
</dbReference>
<dbReference type="Gene3D" id="3.40.225.10">
    <property type="entry name" value="Class II aldolase/adducin N-terminal domain"/>
    <property type="match status" value="1"/>
</dbReference>
<dbReference type="HAMAP" id="MF_01677">
    <property type="entry name" value="Salvage_MtnB"/>
    <property type="match status" value="1"/>
</dbReference>
<dbReference type="InterPro" id="IPR050197">
    <property type="entry name" value="Aldolase_class_II_sugar_metab"/>
</dbReference>
<dbReference type="InterPro" id="IPR001303">
    <property type="entry name" value="Aldolase_II/adducin_N"/>
</dbReference>
<dbReference type="InterPro" id="IPR036409">
    <property type="entry name" value="Aldolase_II/adducin_N_sf"/>
</dbReference>
<dbReference type="InterPro" id="IPR017714">
    <property type="entry name" value="MethylthioRu-1-P_deHdtase_MtnB"/>
</dbReference>
<dbReference type="NCBIfam" id="NF006672">
    <property type="entry name" value="PRK09220.1"/>
    <property type="match status" value="1"/>
</dbReference>
<dbReference type="NCBIfam" id="TIGR03328">
    <property type="entry name" value="salvage_mtnB"/>
    <property type="match status" value="1"/>
</dbReference>
<dbReference type="PANTHER" id="PTHR22789">
    <property type="entry name" value="FUCULOSE PHOSPHATE ALDOLASE"/>
    <property type="match status" value="1"/>
</dbReference>
<dbReference type="PANTHER" id="PTHR22789:SF8">
    <property type="entry name" value="L-RIBULOSE-5-PHOSPHATE 4-EPIMERASE SGBE"/>
    <property type="match status" value="1"/>
</dbReference>
<dbReference type="Pfam" id="PF00596">
    <property type="entry name" value="Aldolase_II"/>
    <property type="match status" value="1"/>
</dbReference>
<dbReference type="SMART" id="SM01007">
    <property type="entry name" value="Aldolase_II"/>
    <property type="match status" value="1"/>
</dbReference>
<dbReference type="SUPFAM" id="SSF53639">
    <property type="entry name" value="AraD/HMP-PK domain-like"/>
    <property type="match status" value="1"/>
</dbReference>
<protein>
    <recommendedName>
        <fullName evidence="1">Methylthioribulose-1-phosphate dehydratase</fullName>
        <shortName evidence="1">MTRu-1-P dehydratase</shortName>
        <ecNumber evidence="1">4.2.1.109</ecNumber>
    </recommendedName>
</protein>
<comment type="function">
    <text evidence="1">Catalyzes the dehydration of methylthioribulose-1-phosphate (MTRu-1-P) into 2,3-diketo-5-methylthiopentyl-1-phosphate (DK-MTP-1-P).</text>
</comment>
<comment type="catalytic activity">
    <reaction evidence="1">
        <text>5-(methylsulfanyl)-D-ribulose 1-phosphate = 5-methylsulfanyl-2,3-dioxopentyl phosphate + H2O</text>
        <dbReference type="Rhea" id="RHEA:15549"/>
        <dbReference type="ChEBI" id="CHEBI:15377"/>
        <dbReference type="ChEBI" id="CHEBI:58548"/>
        <dbReference type="ChEBI" id="CHEBI:58828"/>
        <dbReference type="EC" id="4.2.1.109"/>
    </reaction>
</comment>
<comment type="cofactor">
    <cofactor evidence="1">
        <name>Zn(2+)</name>
        <dbReference type="ChEBI" id="CHEBI:29105"/>
    </cofactor>
    <text evidence="1">Binds 1 zinc ion per subunit.</text>
</comment>
<comment type="pathway">
    <text evidence="1">Amino-acid biosynthesis; L-methionine biosynthesis via salvage pathway; L-methionine from S-methyl-5-thio-alpha-D-ribose 1-phosphate: step 2/6.</text>
</comment>
<comment type="similarity">
    <text evidence="1">Belongs to the aldolase class II family. MtnB subfamily.</text>
</comment>
<accession>B2FPP4</accession>
<name>MTNB_STRMK</name>
<evidence type="ECO:0000255" key="1">
    <source>
        <dbReference type="HAMAP-Rule" id="MF_01677"/>
    </source>
</evidence>
<reference key="1">
    <citation type="journal article" date="2008" name="Genome Biol.">
        <title>The complete genome, comparative and functional analysis of Stenotrophomonas maltophilia reveals an organism heavily shielded by drug resistance determinants.</title>
        <authorList>
            <person name="Crossman L.C."/>
            <person name="Gould V.C."/>
            <person name="Dow J.M."/>
            <person name="Vernikos G.S."/>
            <person name="Okazaki A."/>
            <person name="Sebaihia M."/>
            <person name="Saunders D."/>
            <person name="Arrowsmith C."/>
            <person name="Carver T."/>
            <person name="Peters N."/>
            <person name="Adlem E."/>
            <person name="Kerhornou A."/>
            <person name="Lord A."/>
            <person name="Murphy L."/>
            <person name="Seeger K."/>
            <person name="Squares R."/>
            <person name="Rutter S."/>
            <person name="Quail M.A."/>
            <person name="Rajandream M.A."/>
            <person name="Harris D."/>
            <person name="Churcher C."/>
            <person name="Bentley S.D."/>
            <person name="Parkhill J."/>
            <person name="Thomson N.R."/>
            <person name="Avison M.B."/>
        </authorList>
    </citation>
    <scope>NUCLEOTIDE SEQUENCE [LARGE SCALE GENOMIC DNA]</scope>
    <source>
        <strain>K279a</strain>
    </source>
</reference>
<feature type="chain" id="PRO_0000357107" description="Methylthioribulose-1-phosphate dehydratase">
    <location>
        <begin position="1"/>
        <end position="213"/>
    </location>
</feature>
<feature type="binding site" evidence="1">
    <location>
        <position position="104"/>
    </location>
    <ligand>
        <name>Zn(2+)</name>
        <dbReference type="ChEBI" id="CHEBI:29105"/>
    </ligand>
</feature>
<feature type="binding site" evidence="1">
    <location>
        <position position="106"/>
    </location>
    <ligand>
        <name>Zn(2+)</name>
        <dbReference type="ChEBI" id="CHEBI:29105"/>
    </ligand>
</feature>
<proteinExistence type="inferred from homology"/>
<gene>
    <name evidence="1" type="primary">mtnB</name>
    <name type="ordered locus">Smlt2189</name>
</gene>
<organism>
    <name type="scientific">Stenotrophomonas maltophilia (strain K279a)</name>
    <dbReference type="NCBI Taxonomy" id="522373"/>
    <lineage>
        <taxon>Bacteria</taxon>
        <taxon>Pseudomonadati</taxon>
        <taxon>Pseudomonadota</taxon>
        <taxon>Gammaproteobacteria</taxon>
        <taxon>Lysobacterales</taxon>
        <taxon>Lysobacteraceae</taxon>
        <taxon>Stenotrophomonas</taxon>
        <taxon>Stenotrophomonas maltophilia group</taxon>
    </lineage>
</organism>
<sequence length="213" mass="24104">MDTTTFPYDTARLGELAQLLIDNVRELAQAGWTPATSSNFSHRLDDRHAAITVSGKDKGRLIEDDIMVVDFDGKAVGRPLRPSAETLLHTQLYRRFPEIGCVLHTHSPVQTIASRLYAPQGHVHLEGYELLKAFAGNSTHEMAIDVPVFANTQDMNVLSKQVDDLLDRQNLWGYLIDGHGLYAWGRDMAEARRHLEAFEFLFHCELELRRLHG</sequence>